<reference key="1">
    <citation type="journal article" date="1997" name="Nature">
        <title>Genomic sequence of a Lyme disease spirochaete, Borrelia burgdorferi.</title>
        <authorList>
            <person name="Fraser C.M."/>
            <person name="Casjens S."/>
            <person name="Huang W.M."/>
            <person name="Sutton G.G."/>
            <person name="Clayton R.A."/>
            <person name="Lathigra R."/>
            <person name="White O."/>
            <person name="Ketchum K.A."/>
            <person name="Dodson R.J."/>
            <person name="Hickey E.K."/>
            <person name="Gwinn M.L."/>
            <person name="Dougherty B.A."/>
            <person name="Tomb J.-F."/>
            <person name="Fleischmann R.D."/>
            <person name="Richardson D.L."/>
            <person name="Peterson J.D."/>
            <person name="Kerlavage A.R."/>
            <person name="Quackenbush J."/>
            <person name="Salzberg S.L."/>
            <person name="Hanson M."/>
            <person name="van Vugt R."/>
            <person name="Palmer N."/>
            <person name="Adams M.D."/>
            <person name="Gocayne J.D."/>
            <person name="Weidman J.F."/>
            <person name="Utterback T.R."/>
            <person name="Watthey L."/>
            <person name="McDonald L.A."/>
            <person name="Artiach P."/>
            <person name="Bowman C."/>
            <person name="Garland S.A."/>
            <person name="Fujii C."/>
            <person name="Cotton M.D."/>
            <person name="Horst K."/>
            <person name="Roberts K.M."/>
            <person name="Hatch B."/>
            <person name="Smith H.O."/>
            <person name="Venter J.C."/>
        </authorList>
    </citation>
    <scope>NUCLEOTIDE SEQUENCE [LARGE SCALE GENOMIC DNA]</scope>
    <source>
        <strain>ATCC 35210 / DSM 4680 / CIP 102532 / B31</strain>
    </source>
</reference>
<evidence type="ECO:0000255" key="1">
    <source>
        <dbReference type="HAMAP-Rule" id="MF_00502"/>
    </source>
</evidence>
<evidence type="ECO:0000305" key="2"/>
<evidence type="ECO:0007829" key="3">
    <source>
        <dbReference type="PDB" id="8FN2"/>
    </source>
</evidence>
<sequence length="81" mass="9301">MRKDIHPKNNLVVFKDGSNGAMFLTKSTLNSKETIKYIDGKEYPLVTVEITSKSHPFYTGQQKFVDAAGRIDKFNKRYKKS</sequence>
<dbReference type="EMBL" id="AE000783">
    <property type="protein sequence ID" value="AAC66620.1"/>
    <property type="molecule type" value="Genomic_DNA"/>
</dbReference>
<dbReference type="PIR" id="E70128">
    <property type="entry name" value="E70128"/>
</dbReference>
<dbReference type="RefSeq" id="NP_212363.1">
    <property type="nucleotide sequence ID" value="NC_001318.1"/>
</dbReference>
<dbReference type="RefSeq" id="WP_010889710.1">
    <property type="nucleotide sequence ID" value="NC_001318.1"/>
</dbReference>
<dbReference type="PDB" id="8FMW">
    <property type="method" value="EM"/>
    <property type="resolution" value="2.86 A"/>
    <property type="chains" value="Ac=1-81"/>
</dbReference>
<dbReference type="PDB" id="8FN2">
    <property type="method" value="EM"/>
    <property type="resolution" value="3.40 A"/>
    <property type="chains" value="c=1-81"/>
</dbReference>
<dbReference type="PDBsum" id="8FMW"/>
<dbReference type="PDBsum" id="8FN2"/>
<dbReference type="EMDB" id="EMD-29298"/>
<dbReference type="EMDB" id="EMD-29304"/>
<dbReference type="SMR" id="O51247"/>
<dbReference type="STRING" id="224326.BB_0229"/>
<dbReference type="PaxDb" id="224326-BB_0229"/>
<dbReference type="EnsemblBacteria" id="AAC66620">
    <property type="protein sequence ID" value="AAC66620"/>
    <property type="gene ID" value="BB_0229"/>
</dbReference>
<dbReference type="KEGG" id="bbu:BB_0229"/>
<dbReference type="PATRIC" id="fig|224326.49.peg.628"/>
<dbReference type="HOGENOM" id="CLU_114306_2_2_12"/>
<dbReference type="OrthoDB" id="9803251at2"/>
<dbReference type="Proteomes" id="UP000001807">
    <property type="component" value="Chromosome"/>
</dbReference>
<dbReference type="GO" id="GO:1990904">
    <property type="term" value="C:ribonucleoprotein complex"/>
    <property type="evidence" value="ECO:0007669"/>
    <property type="project" value="UniProtKB-KW"/>
</dbReference>
<dbReference type="GO" id="GO:0005840">
    <property type="term" value="C:ribosome"/>
    <property type="evidence" value="ECO:0007669"/>
    <property type="project" value="UniProtKB-KW"/>
</dbReference>
<dbReference type="GO" id="GO:0003735">
    <property type="term" value="F:structural constituent of ribosome"/>
    <property type="evidence" value="ECO:0007669"/>
    <property type="project" value="InterPro"/>
</dbReference>
<dbReference type="GO" id="GO:0006412">
    <property type="term" value="P:translation"/>
    <property type="evidence" value="ECO:0007669"/>
    <property type="project" value="UniProtKB-UniRule"/>
</dbReference>
<dbReference type="Gene3D" id="4.10.830.30">
    <property type="entry name" value="Ribosomal protein L31"/>
    <property type="match status" value="1"/>
</dbReference>
<dbReference type="HAMAP" id="MF_00502">
    <property type="entry name" value="Ribosomal_bL31_2"/>
    <property type="match status" value="1"/>
</dbReference>
<dbReference type="InterPro" id="IPR034704">
    <property type="entry name" value="Ribosomal_bL28/bL31-like_sf"/>
</dbReference>
<dbReference type="InterPro" id="IPR002150">
    <property type="entry name" value="Ribosomal_bL31"/>
</dbReference>
<dbReference type="InterPro" id="IPR027493">
    <property type="entry name" value="Ribosomal_bL31_B"/>
</dbReference>
<dbReference type="InterPro" id="IPR042105">
    <property type="entry name" value="Ribosomal_bL31_sf"/>
</dbReference>
<dbReference type="NCBIfam" id="TIGR00105">
    <property type="entry name" value="L31"/>
    <property type="match status" value="1"/>
</dbReference>
<dbReference type="NCBIfam" id="NF002462">
    <property type="entry name" value="PRK01678.1"/>
    <property type="match status" value="1"/>
</dbReference>
<dbReference type="PANTHER" id="PTHR33280">
    <property type="entry name" value="50S RIBOSOMAL PROTEIN L31, CHLOROPLASTIC"/>
    <property type="match status" value="1"/>
</dbReference>
<dbReference type="PANTHER" id="PTHR33280:SF1">
    <property type="entry name" value="LARGE RIBOSOMAL SUBUNIT PROTEIN BL31C"/>
    <property type="match status" value="1"/>
</dbReference>
<dbReference type="Pfam" id="PF01197">
    <property type="entry name" value="Ribosomal_L31"/>
    <property type="match status" value="1"/>
</dbReference>
<dbReference type="PRINTS" id="PR01249">
    <property type="entry name" value="RIBOSOMALL31"/>
</dbReference>
<dbReference type="SUPFAM" id="SSF143800">
    <property type="entry name" value="L28p-like"/>
    <property type="match status" value="1"/>
</dbReference>
<dbReference type="PROSITE" id="PS01143">
    <property type="entry name" value="RIBOSOMAL_L31"/>
    <property type="match status" value="1"/>
</dbReference>
<feature type="chain" id="PRO_0000173208" description="Large ribosomal subunit protein bL31B">
    <location>
        <begin position="1"/>
        <end position="81"/>
    </location>
</feature>
<feature type="strand" evidence="3">
    <location>
        <begin position="10"/>
        <end position="16"/>
    </location>
</feature>
<feature type="turn" evidence="3">
    <location>
        <begin position="17"/>
        <end position="19"/>
    </location>
</feature>
<feature type="strand" evidence="3">
    <location>
        <begin position="22"/>
        <end position="28"/>
    </location>
</feature>
<feature type="strand" evidence="3">
    <location>
        <begin position="32"/>
        <end position="36"/>
    </location>
</feature>
<feature type="strand" evidence="3">
    <location>
        <begin position="42"/>
        <end position="49"/>
    </location>
</feature>
<accession>O51247</accession>
<gene>
    <name evidence="1" type="primary">rpmE2</name>
    <name type="ordered locus">BB_0229</name>
</gene>
<protein>
    <recommendedName>
        <fullName evidence="1">Large ribosomal subunit protein bL31B</fullName>
    </recommendedName>
    <alternativeName>
        <fullName evidence="2">50S ribosomal protein L31 type B</fullName>
    </alternativeName>
</protein>
<keyword id="KW-0002">3D-structure</keyword>
<keyword id="KW-1185">Reference proteome</keyword>
<keyword id="KW-0687">Ribonucleoprotein</keyword>
<keyword id="KW-0689">Ribosomal protein</keyword>
<proteinExistence type="evidence at protein level"/>
<organism>
    <name type="scientific">Borreliella burgdorferi (strain ATCC 35210 / DSM 4680 / CIP 102532 / B31)</name>
    <name type="common">Borrelia burgdorferi</name>
    <dbReference type="NCBI Taxonomy" id="224326"/>
    <lineage>
        <taxon>Bacteria</taxon>
        <taxon>Pseudomonadati</taxon>
        <taxon>Spirochaetota</taxon>
        <taxon>Spirochaetia</taxon>
        <taxon>Spirochaetales</taxon>
        <taxon>Borreliaceae</taxon>
        <taxon>Borreliella</taxon>
    </lineage>
</organism>
<name>RL31B_BORBU</name>
<comment type="subunit">
    <text evidence="1">Part of the 50S ribosomal subunit.</text>
</comment>
<comment type="similarity">
    <text evidence="1">Belongs to the bacterial ribosomal protein bL31 family. Type B subfamily.</text>
</comment>